<organism>
    <name type="scientific">Piper cenocladum</name>
    <name type="common">Ant piper</name>
    <dbReference type="NCBI Taxonomy" id="398741"/>
    <lineage>
        <taxon>Eukaryota</taxon>
        <taxon>Viridiplantae</taxon>
        <taxon>Streptophyta</taxon>
        <taxon>Embryophyta</taxon>
        <taxon>Tracheophyta</taxon>
        <taxon>Spermatophyta</taxon>
        <taxon>Magnoliopsida</taxon>
        <taxon>Magnoliidae</taxon>
        <taxon>Piperales</taxon>
        <taxon>Piperaceae</taxon>
        <taxon>Piper</taxon>
    </lineage>
</organism>
<proteinExistence type="inferred from homology"/>
<protein>
    <recommendedName>
        <fullName evidence="1">Photosystem I P700 chlorophyll a apoprotein A1</fullName>
        <ecNumber evidence="1">1.97.1.12</ecNumber>
    </recommendedName>
    <alternativeName>
        <fullName evidence="1">PSI-A</fullName>
    </alternativeName>
    <alternativeName>
        <fullName evidence="1">PsaA</fullName>
    </alternativeName>
</protein>
<sequence length="750" mass="83120">MIIRSPESEVKIVVDRDPVKTSFEEWAKPGHFSRTIAKGPDTTTWIWNLHADAHDFDSHTSDLEEISRKVFSAHFGQLSIIFLWLSGMYFHGARFSNYEAWLSDPTHIGPSAQVVWPIVGQEILNGDVGGGFRGIQITSGFFQLWRASGITNELQLYCTAIGALVFAGLMLFAGWFHYHKAAPKLSWFQDVESMLNHHLAGLLGLGSLSWAGHQVHVSLPINQFLDAGVDPKEIPLPHEFILNRDLLAQLYPSFAEGATPLFTLNWSKYAEFLTFRGGLDPTTGGLWLTDIVHHHLAIAILFLIAGHMYRTNWGIGHSLKDILEAHKGPFTGQGHKGLYEILTTSWHAQLSLNLAMLGSLTIVVAHHMYSMPPYPYLATDYGTQLSLFTHHMWIGGFLIVGAAAHAAIFMVRDYDPTTRYNDLLDRVLRHRDAIISHLNWACIFLGFHSFGLYIHNDTMSALGRPQDMFSDTAIQLQPIFAQWIQNTHALAPSATAPGAIASTSLTWGGADLVAVGGKVALLPIPLGTADFLVHHIHAFTIHVTVLILLKGVLFARSSRLIPDKANLGFRFPCDGPGRGGTCQVSAWDHVFLGLFWMYNAISVVIFHFSWKMQSDVWGSISDQGVVTHITGGNFAQSSITINGWLRDFLWAQASQVIQSYGSSLSAYGLFFLGAHFVWAFSLMFLFSGRGYWQELIESIVWAHNKLKVAPATQPRALSIVQGRAVGVTHYLLGGIATTWAFFLARIIAVG</sequence>
<feature type="chain" id="PRO_0000275958" description="Photosystem I P700 chlorophyll a apoprotein A1">
    <location>
        <begin position="1"/>
        <end position="750"/>
    </location>
</feature>
<feature type="transmembrane region" description="Helical; Name=I" evidence="1">
    <location>
        <begin position="70"/>
        <end position="93"/>
    </location>
</feature>
<feature type="transmembrane region" description="Helical; Name=II" evidence="1">
    <location>
        <begin position="156"/>
        <end position="179"/>
    </location>
</feature>
<feature type="transmembrane region" description="Helical; Name=III" evidence="1">
    <location>
        <begin position="195"/>
        <end position="219"/>
    </location>
</feature>
<feature type="transmembrane region" description="Helical; Name=IV" evidence="1">
    <location>
        <begin position="291"/>
        <end position="309"/>
    </location>
</feature>
<feature type="transmembrane region" description="Helical; Name=V" evidence="1">
    <location>
        <begin position="346"/>
        <end position="369"/>
    </location>
</feature>
<feature type="transmembrane region" description="Helical; Name=VI" evidence="1">
    <location>
        <begin position="385"/>
        <end position="411"/>
    </location>
</feature>
<feature type="transmembrane region" description="Helical; Name=VII" evidence="1">
    <location>
        <begin position="433"/>
        <end position="455"/>
    </location>
</feature>
<feature type="transmembrane region" description="Helical; Name=VIII" evidence="1">
    <location>
        <begin position="531"/>
        <end position="549"/>
    </location>
</feature>
<feature type="transmembrane region" description="Helical; Name=IX" evidence="1">
    <location>
        <begin position="589"/>
        <end position="610"/>
    </location>
</feature>
<feature type="transmembrane region" description="Helical; Name=X" evidence="1">
    <location>
        <begin position="664"/>
        <end position="686"/>
    </location>
</feature>
<feature type="transmembrane region" description="Helical; Name=XI" evidence="1">
    <location>
        <begin position="724"/>
        <end position="744"/>
    </location>
</feature>
<feature type="binding site" evidence="1">
    <location>
        <position position="573"/>
    </location>
    <ligand>
        <name>[4Fe-4S] cluster</name>
        <dbReference type="ChEBI" id="CHEBI:49883"/>
        <note>ligand shared between dimeric partners</note>
    </ligand>
</feature>
<feature type="binding site" evidence="1">
    <location>
        <position position="582"/>
    </location>
    <ligand>
        <name>[4Fe-4S] cluster</name>
        <dbReference type="ChEBI" id="CHEBI:49883"/>
        <note>ligand shared between dimeric partners</note>
    </ligand>
</feature>
<feature type="binding site" description="axial binding residue" evidence="1">
    <location>
        <position position="675"/>
    </location>
    <ligand>
        <name>chlorophyll a'</name>
        <dbReference type="ChEBI" id="CHEBI:189419"/>
        <label>A1</label>
    </ligand>
    <ligandPart>
        <name>Mg</name>
        <dbReference type="ChEBI" id="CHEBI:25107"/>
    </ligandPart>
</feature>
<feature type="binding site" description="axial binding residue" evidence="1">
    <location>
        <position position="683"/>
    </location>
    <ligand>
        <name>chlorophyll a</name>
        <dbReference type="ChEBI" id="CHEBI:58416"/>
        <label>A3</label>
    </ligand>
    <ligandPart>
        <name>Mg</name>
        <dbReference type="ChEBI" id="CHEBI:25107"/>
    </ligandPart>
</feature>
<feature type="binding site" evidence="1">
    <location>
        <position position="691"/>
    </location>
    <ligand>
        <name>chlorophyll a</name>
        <dbReference type="ChEBI" id="CHEBI:58416"/>
        <label>A3</label>
    </ligand>
</feature>
<feature type="binding site" evidence="1">
    <location>
        <position position="692"/>
    </location>
    <ligand>
        <name>phylloquinone</name>
        <dbReference type="ChEBI" id="CHEBI:18067"/>
        <label>A</label>
    </ligand>
</feature>
<gene>
    <name evidence="1" type="primary">psaA</name>
</gene>
<keyword id="KW-0004">4Fe-4S</keyword>
<keyword id="KW-0148">Chlorophyll</keyword>
<keyword id="KW-0150">Chloroplast</keyword>
<keyword id="KW-0157">Chromophore</keyword>
<keyword id="KW-0249">Electron transport</keyword>
<keyword id="KW-0408">Iron</keyword>
<keyword id="KW-0411">Iron-sulfur</keyword>
<keyword id="KW-0460">Magnesium</keyword>
<keyword id="KW-0472">Membrane</keyword>
<keyword id="KW-0479">Metal-binding</keyword>
<keyword id="KW-0560">Oxidoreductase</keyword>
<keyword id="KW-0602">Photosynthesis</keyword>
<keyword id="KW-0603">Photosystem I</keyword>
<keyword id="KW-0934">Plastid</keyword>
<keyword id="KW-0793">Thylakoid</keyword>
<keyword id="KW-0812">Transmembrane</keyword>
<keyword id="KW-1133">Transmembrane helix</keyword>
<keyword id="KW-0813">Transport</keyword>
<reference key="1">
    <citation type="journal article" date="2006" name="BMC Evol. Biol.">
        <title>Complete plastid genome sequences of Drimys, Liriodendron, and Piper: implications for the phylogenetic relationships of magnoliids.</title>
        <authorList>
            <person name="Cai Z."/>
            <person name="Penaflor C."/>
            <person name="Kuehl J.V."/>
            <person name="Leebens-Mack J."/>
            <person name="Carlson J.E."/>
            <person name="dePamphilis C.W."/>
            <person name="Boore J.L."/>
            <person name="Jansen R.K."/>
        </authorList>
    </citation>
    <scope>NUCLEOTIDE SEQUENCE [LARGE SCALE GENOMIC DNA]</scope>
</reference>
<name>PSAA_PIPCE</name>
<accession>Q06GR0</accession>
<dbReference type="EC" id="1.97.1.12" evidence="1"/>
<dbReference type="EMBL" id="DQ887677">
    <property type="protein sequence ID" value="ABI14472.1"/>
    <property type="molecule type" value="Genomic_DNA"/>
</dbReference>
<dbReference type="RefSeq" id="YP_784473.1">
    <property type="nucleotide sequence ID" value="NC_008457.1"/>
</dbReference>
<dbReference type="SMR" id="Q06GR0"/>
<dbReference type="GeneID" id="4363736"/>
<dbReference type="GO" id="GO:0009535">
    <property type="term" value="C:chloroplast thylakoid membrane"/>
    <property type="evidence" value="ECO:0007669"/>
    <property type="project" value="UniProtKB-SubCell"/>
</dbReference>
<dbReference type="GO" id="GO:0009522">
    <property type="term" value="C:photosystem I"/>
    <property type="evidence" value="ECO:0007669"/>
    <property type="project" value="UniProtKB-KW"/>
</dbReference>
<dbReference type="GO" id="GO:0051539">
    <property type="term" value="F:4 iron, 4 sulfur cluster binding"/>
    <property type="evidence" value="ECO:0007669"/>
    <property type="project" value="UniProtKB-KW"/>
</dbReference>
<dbReference type="GO" id="GO:0016168">
    <property type="term" value="F:chlorophyll binding"/>
    <property type="evidence" value="ECO:0007669"/>
    <property type="project" value="UniProtKB-KW"/>
</dbReference>
<dbReference type="GO" id="GO:0009055">
    <property type="term" value="F:electron transfer activity"/>
    <property type="evidence" value="ECO:0007669"/>
    <property type="project" value="UniProtKB-UniRule"/>
</dbReference>
<dbReference type="GO" id="GO:0000287">
    <property type="term" value="F:magnesium ion binding"/>
    <property type="evidence" value="ECO:0007669"/>
    <property type="project" value="UniProtKB-UniRule"/>
</dbReference>
<dbReference type="GO" id="GO:0016491">
    <property type="term" value="F:oxidoreductase activity"/>
    <property type="evidence" value="ECO:0007669"/>
    <property type="project" value="UniProtKB-KW"/>
</dbReference>
<dbReference type="GO" id="GO:0015979">
    <property type="term" value="P:photosynthesis"/>
    <property type="evidence" value="ECO:0007669"/>
    <property type="project" value="UniProtKB-UniRule"/>
</dbReference>
<dbReference type="FunFam" id="1.20.1130.10:FF:000001">
    <property type="entry name" value="Photosystem I P700 chlorophyll a apoprotein A2"/>
    <property type="match status" value="1"/>
</dbReference>
<dbReference type="Gene3D" id="1.20.1130.10">
    <property type="entry name" value="Photosystem I PsaA/PsaB"/>
    <property type="match status" value="1"/>
</dbReference>
<dbReference type="HAMAP" id="MF_00458">
    <property type="entry name" value="PSI_PsaA"/>
    <property type="match status" value="1"/>
</dbReference>
<dbReference type="InterPro" id="IPR006243">
    <property type="entry name" value="PSI_PsaA"/>
</dbReference>
<dbReference type="InterPro" id="IPR001280">
    <property type="entry name" value="PSI_PsaA/B"/>
</dbReference>
<dbReference type="InterPro" id="IPR020586">
    <property type="entry name" value="PSI_PsaA/B_CS"/>
</dbReference>
<dbReference type="InterPro" id="IPR036408">
    <property type="entry name" value="PSI_PsaA/B_sf"/>
</dbReference>
<dbReference type="NCBIfam" id="TIGR01335">
    <property type="entry name" value="psaA"/>
    <property type="match status" value="1"/>
</dbReference>
<dbReference type="PANTHER" id="PTHR30128">
    <property type="entry name" value="OUTER MEMBRANE PROTEIN, OMPA-RELATED"/>
    <property type="match status" value="1"/>
</dbReference>
<dbReference type="PANTHER" id="PTHR30128:SF19">
    <property type="entry name" value="PHOTOSYSTEM I P700 CHLOROPHYLL A APOPROTEIN A1-RELATED"/>
    <property type="match status" value="1"/>
</dbReference>
<dbReference type="Pfam" id="PF00223">
    <property type="entry name" value="PsaA_PsaB"/>
    <property type="match status" value="1"/>
</dbReference>
<dbReference type="PIRSF" id="PIRSF002905">
    <property type="entry name" value="PSI_A"/>
    <property type="match status" value="1"/>
</dbReference>
<dbReference type="PRINTS" id="PR00257">
    <property type="entry name" value="PHOTSYSPSAAB"/>
</dbReference>
<dbReference type="SUPFAM" id="SSF81558">
    <property type="entry name" value="Photosystem I subunits PsaA/PsaB"/>
    <property type="match status" value="1"/>
</dbReference>
<dbReference type="PROSITE" id="PS00419">
    <property type="entry name" value="PHOTOSYSTEM_I_PSAAB"/>
    <property type="match status" value="1"/>
</dbReference>
<geneLocation type="chloroplast"/>
<evidence type="ECO:0000255" key="1">
    <source>
        <dbReference type="HAMAP-Rule" id="MF_00458"/>
    </source>
</evidence>
<comment type="function">
    <text>PsaA and PsaB bind P700, the primary electron donor of photosystem I (PSI), as well as the electron acceptors A0, A1 and FX. PSI is a plastocyanin-ferredoxin oxidoreductase, converting photonic excitation into a charge separation, which transfers an electron from the donor P700 chlorophyll pair to the spectroscopically characterized acceptors A0, A1, FX, FA and FB in turn. Oxidized P700 is reduced on the lumenal side of the thylakoid membrane by plastocyanin.</text>
</comment>
<comment type="catalytic activity">
    <reaction evidence="1">
        <text>reduced [plastocyanin] + hnu + oxidized [2Fe-2S]-[ferredoxin] = oxidized [plastocyanin] + reduced [2Fe-2S]-[ferredoxin]</text>
        <dbReference type="Rhea" id="RHEA:30407"/>
        <dbReference type="Rhea" id="RHEA-COMP:10000"/>
        <dbReference type="Rhea" id="RHEA-COMP:10001"/>
        <dbReference type="Rhea" id="RHEA-COMP:10039"/>
        <dbReference type="Rhea" id="RHEA-COMP:10040"/>
        <dbReference type="ChEBI" id="CHEBI:29036"/>
        <dbReference type="ChEBI" id="CHEBI:30212"/>
        <dbReference type="ChEBI" id="CHEBI:33737"/>
        <dbReference type="ChEBI" id="CHEBI:33738"/>
        <dbReference type="ChEBI" id="CHEBI:49552"/>
        <dbReference type="EC" id="1.97.1.12"/>
    </reaction>
</comment>
<comment type="cofactor">
    <text evidence="1">P700 is a chlorophyll a/chlorophyll a' dimer, A0 is one or more chlorophyll a, A1 is one or both phylloquinones and FX is a shared 4Fe-4S iron-sulfur center.</text>
</comment>
<comment type="subunit">
    <text evidence="1">The PsaA/B heterodimer binds the P700 chlorophyll special pair and subsequent electron acceptors. PSI consists of a core antenna complex that captures photons, and an electron transfer chain that converts photonic excitation into a charge separation. The eukaryotic PSI reaction center is composed of at least 11 subunits.</text>
</comment>
<comment type="subcellular location">
    <subcellularLocation>
        <location evidence="1">Plastid</location>
        <location evidence="1">Chloroplast thylakoid membrane</location>
        <topology evidence="1">Multi-pass membrane protein</topology>
    </subcellularLocation>
</comment>
<comment type="similarity">
    <text evidence="1">Belongs to the PsaA/PsaB family.</text>
</comment>